<name>NDK_SHEPA</name>
<dbReference type="EC" id="2.7.4.6" evidence="1"/>
<dbReference type="EMBL" id="CP000851">
    <property type="protein sequence ID" value="ABV86823.1"/>
    <property type="molecule type" value="Genomic_DNA"/>
</dbReference>
<dbReference type="RefSeq" id="WP_012154747.1">
    <property type="nucleotide sequence ID" value="NC_009901.1"/>
</dbReference>
<dbReference type="SMR" id="A8H2N6"/>
<dbReference type="STRING" id="398579.Spea_1498"/>
<dbReference type="KEGG" id="spl:Spea_1498"/>
<dbReference type="eggNOG" id="COG0105">
    <property type="taxonomic scope" value="Bacteria"/>
</dbReference>
<dbReference type="HOGENOM" id="CLU_060216_8_1_6"/>
<dbReference type="OrthoDB" id="9801161at2"/>
<dbReference type="Proteomes" id="UP000002608">
    <property type="component" value="Chromosome"/>
</dbReference>
<dbReference type="GO" id="GO:0005737">
    <property type="term" value="C:cytoplasm"/>
    <property type="evidence" value="ECO:0007669"/>
    <property type="project" value="UniProtKB-SubCell"/>
</dbReference>
<dbReference type="GO" id="GO:0005524">
    <property type="term" value="F:ATP binding"/>
    <property type="evidence" value="ECO:0007669"/>
    <property type="project" value="UniProtKB-UniRule"/>
</dbReference>
<dbReference type="GO" id="GO:0046872">
    <property type="term" value="F:metal ion binding"/>
    <property type="evidence" value="ECO:0007669"/>
    <property type="project" value="UniProtKB-KW"/>
</dbReference>
<dbReference type="GO" id="GO:0004550">
    <property type="term" value="F:nucleoside diphosphate kinase activity"/>
    <property type="evidence" value="ECO:0007669"/>
    <property type="project" value="UniProtKB-UniRule"/>
</dbReference>
<dbReference type="GO" id="GO:0006241">
    <property type="term" value="P:CTP biosynthetic process"/>
    <property type="evidence" value="ECO:0007669"/>
    <property type="project" value="UniProtKB-UniRule"/>
</dbReference>
<dbReference type="GO" id="GO:0006183">
    <property type="term" value="P:GTP biosynthetic process"/>
    <property type="evidence" value="ECO:0007669"/>
    <property type="project" value="UniProtKB-UniRule"/>
</dbReference>
<dbReference type="GO" id="GO:0006228">
    <property type="term" value="P:UTP biosynthetic process"/>
    <property type="evidence" value="ECO:0007669"/>
    <property type="project" value="UniProtKB-UniRule"/>
</dbReference>
<dbReference type="CDD" id="cd04413">
    <property type="entry name" value="NDPk_I"/>
    <property type="match status" value="1"/>
</dbReference>
<dbReference type="FunFam" id="3.30.70.141:FF:000001">
    <property type="entry name" value="Nucleoside diphosphate kinase"/>
    <property type="match status" value="1"/>
</dbReference>
<dbReference type="Gene3D" id="3.30.70.141">
    <property type="entry name" value="Nucleoside diphosphate kinase-like domain"/>
    <property type="match status" value="1"/>
</dbReference>
<dbReference type="HAMAP" id="MF_00451">
    <property type="entry name" value="NDP_kinase"/>
    <property type="match status" value="1"/>
</dbReference>
<dbReference type="InterPro" id="IPR034907">
    <property type="entry name" value="NDK-like_dom"/>
</dbReference>
<dbReference type="InterPro" id="IPR036850">
    <property type="entry name" value="NDK-like_dom_sf"/>
</dbReference>
<dbReference type="InterPro" id="IPR001564">
    <property type="entry name" value="Nucleoside_diP_kinase"/>
</dbReference>
<dbReference type="InterPro" id="IPR023005">
    <property type="entry name" value="Nucleoside_diP_kinase_AS"/>
</dbReference>
<dbReference type="NCBIfam" id="NF001908">
    <property type="entry name" value="PRK00668.1"/>
    <property type="match status" value="1"/>
</dbReference>
<dbReference type="PANTHER" id="PTHR46161">
    <property type="entry name" value="NUCLEOSIDE DIPHOSPHATE KINASE"/>
    <property type="match status" value="1"/>
</dbReference>
<dbReference type="PANTHER" id="PTHR46161:SF3">
    <property type="entry name" value="NUCLEOSIDE DIPHOSPHATE KINASE DDB_G0292928-RELATED"/>
    <property type="match status" value="1"/>
</dbReference>
<dbReference type="Pfam" id="PF00334">
    <property type="entry name" value="NDK"/>
    <property type="match status" value="1"/>
</dbReference>
<dbReference type="PRINTS" id="PR01243">
    <property type="entry name" value="NUCDPKINASE"/>
</dbReference>
<dbReference type="SMART" id="SM00562">
    <property type="entry name" value="NDK"/>
    <property type="match status" value="1"/>
</dbReference>
<dbReference type="SUPFAM" id="SSF54919">
    <property type="entry name" value="Nucleoside diphosphate kinase, NDK"/>
    <property type="match status" value="1"/>
</dbReference>
<dbReference type="PROSITE" id="PS00469">
    <property type="entry name" value="NDPK"/>
    <property type="match status" value="1"/>
</dbReference>
<dbReference type="PROSITE" id="PS51374">
    <property type="entry name" value="NDPK_LIKE"/>
    <property type="match status" value="1"/>
</dbReference>
<accession>A8H2N6</accession>
<feature type="chain" id="PRO_1000080979" description="Nucleoside diphosphate kinase">
    <location>
        <begin position="1"/>
        <end position="143"/>
    </location>
</feature>
<feature type="active site" description="Pros-phosphohistidine intermediate" evidence="1">
    <location>
        <position position="117"/>
    </location>
</feature>
<feature type="binding site" evidence="1">
    <location>
        <position position="11"/>
    </location>
    <ligand>
        <name>ATP</name>
        <dbReference type="ChEBI" id="CHEBI:30616"/>
    </ligand>
</feature>
<feature type="binding site" evidence="1">
    <location>
        <position position="59"/>
    </location>
    <ligand>
        <name>ATP</name>
        <dbReference type="ChEBI" id="CHEBI:30616"/>
    </ligand>
</feature>
<feature type="binding site" evidence="1">
    <location>
        <position position="87"/>
    </location>
    <ligand>
        <name>ATP</name>
        <dbReference type="ChEBI" id="CHEBI:30616"/>
    </ligand>
</feature>
<feature type="binding site" evidence="1">
    <location>
        <position position="93"/>
    </location>
    <ligand>
        <name>ATP</name>
        <dbReference type="ChEBI" id="CHEBI:30616"/>
    </ligand>
</feature>
<feature type="binding site" evidence="1">
    <location>
        <position position="104"/>
    </location>
    <ligand>
        <name>ATP</name>
        <dbReference type="ChEBI" id="CHEBI:30616"/>
    </ligand>
</feature>
<feature type="binding site" evidence="1">
    <location>
        <position position="114"/>
    </location>
    <ligand>
        <name>ATP</name>
        <dbReference type="ChEBI" id="CHEBI:30616"/>
    </ligand>
</feature>
<comment type="function">
    <text evidence="1">Major role in the synthesis of nucleoside triphosphates other than ATP. The ATP gamma phosphate is transferred to the NDP beta phosphate via a ping-pong mechanism, using a phosphorylated active-site intermediate.</text>
</comment>
<comment type="catalytic activity">
    <reaction evidence="1">
        <text>a 2'-deoxyribonucleoside 5'-diphosphate + ATP = a 2'-deoxyribonucleoside 5'-triphosphate + ADP</text>
        <dbReference type="Rhea" id="RHEA:44640"/>
        <dbReference type="ChEBI" id="CHEBI:30616"/>
        <dbReference type="ChEBI" id="CHEBI:61560"/>
        <dbReference type="ChEBI" id="CHEBI:73316"/>
        <dbReference type="ChEBI" id="CHEBI:456216"/>
        <dbReference type="EC" id="2.7.4.6"/>
    </reaction>
</comment>
<comment type="catalytic activity">
    <reaction evidence="1">
        <text>a ribonucleoside 5'-diphosphate + ATP = a ribonucleoside 5'-triphosphate + ADP</text>
        <dbReference type="Rhea" id="RHEA:18113"/>
        <dbReference type="ChEBI" id="CHEBI:30616"/>
        <dbReference type="ChEBI" id="CHEBI:57930"/>
        <dbReference type="ChEBI" id="CHEBI:61557"/>
        <dbReference type="ChEBI" id="CHEBI:456216"/>
        <dbReference type="EC" id="2.7.4.6"/>
    </reaction>
</comment>
<comment type="cofactor">
    <cofactor evidence="1">
        <name>Mg(2+)</name>
        <dbReference type="ChEBI" id="CHEBI:18420"/>
    </cofactor>
</comment>
<comment type="subunit">
    <text evidence="1">Homotetramer.</text>
</comment>
<comment type="subcellular location">
    <subcellularLocation>
        <location evidence="1">Cytoplasm</location>
    </subcellularLocation>
</comment>
<comment type="similarity">
    <text evidence="1">Belongs to the NDK family.</text>
</comment>
<evidence type="ECO:0000255" key="1">
    <source>
        <dbReference type="HAMAP-Rule" id="MF_00451"/>
    </source>
</evidence>
<keyword id="KW-0067">ATP-binding</keyword>
<keyword id="KW-0963">Cytoplasm</keyword>
<keyword id="KW-0418">Kinase</keyword>
<keyword id="KW-0460">Magnesium</keyword>
<keyword id="KW-0479">Metal-binding</keyword>
<keyword id="KW-0546">Nucleotide metabolism</keyword>
<keyword id="KW-0547">Nucleotide-binding</keyword>
<keyword id="KW-0597">Phosphoprotein</keyword>
<keyword id="KW-1185">Reference proteome</keyword>
<keyword id="KW-0808">Transferase</keyword>
<sequence length="143" mass="15546">MAIERTFSIIKPDAVAKNHIGAIYNRFETAGLKIIASKMIHLSKEQAEGFYAEHSERPFFGALVAFMTSGPIMVQTLEGENAVLAHREILGATNPAEAAEGTIRADFAESIDENAAHGSDSVASAEREVAYFFSAEELCPRTR</sequence>
<reference key="1">
    <citation type="submission" date="2007-10" db="EMBL/GenBank/DDBJ databases">
        <title>Complete sequence of Shewanella pealeana ATCC 700345.</title>
        <authorList>
            <consortium name="US DOE Joint Genome Institute"/>
            <person name="Copeland A."/>
            <person name="Lucas S."/>
            <person name="Lapidus A."/>
            <person name="Barry K."/>
            <person name="Glavina del Rio T."/>
            <person name="Dalin E."/>
            <person name="Tice H."/>
            <person name="Pitluck S."/>
            <person name="Chertkov O."/>
            <person name="Brettin T."/>
            <person name="Bruce D."/>
            <person name="Detter J.C."/>
            <person name="Han C."/>
            <person name="Schmutz J."/>
            <person name="Larimer F."/>
            <person name="Land M."/>
            <person name="Hauser L."/>
            <person name="Kyrpides N."/>
            <person name="Kim E."/>
            <person name="Zhao J.-S.Z."/>
            <person name="Manno D."/>
            <person name="Hawari J."/>
            <person name="Richardson P."/>
        </authorList>
    </citation>
    <scope>NUCLEOTIDE SEQUENCE [LARGE SCALE GENOMIC DNA]</scope>
    <source>
        <strain>ATCC 700345 / ANG-SQ1</strain>
    </source>
</reference>
<gene>
    <name evidence="1" type="primary">ndk</name>
    <name type="ordered locus">Spea_1498</name>
</gene>
<protein>
    <recommendedName>
        <fullName evidence="1">Nucleoside diphosphate kinase</fullName>
        <shortName evidence="1">NDK</shortName>
        <shortName evidence="1">NDP kinase</shortName>
        <ecNumber evidence="1">2.7.4.6</ecNumber>
    </recommendedName>
    <alternativeName>
        <fullName evidence="1">Nucleoside-2-P kinase</fullName>
    </alternativeName>
</protein>
<proteinExistence type="inferred from homology"/>
<organism>
    <name type="scientific">Shewanella pealeana (strain ATCC 700345 / ANG-SQ1)</name>
    <dbReference type="NCBI Taxonomy" id="398579"/>
    <lineage>
        <taxon>Bacteria</taxon>
        <taxon>Pseudomonadati</taxon>
        <taxon>Pseudomonadota</taxon>
        <taxon>Gammaproteobacteria</taxon>
        <taxon>Alteromonadales</taxon>
        <taxon>Shewanellaceae</taxon>
        <taxon>Shewanella</taxon>
    </lineage>
</organism>